<sequence>MNIYLISKVFIKYHLFQNILKSYLLNFLVRLMALGLDRNMEGVLCYLLFWISGLIFLLLEREDDFIRFHAMQSFITFLSLNLIAIIVSAIPIIGWVASTLINIAIIILWIVGMIKAYNGERYKFPVFGDIAERYYREFLK</sequence>
<feature type="chain" id="PRO_0000158603" description="UPF0132 membrane protein MJ1527">
    <location>
        <begin position="1"/>
        <end position="140"/>
    </location>
</feature>
<feature type="transmembrane region" description="Helical" evidence="1">
    <location>
        <begin position="40"/>
        <end position="60"/>
    </location>
</feature>
<feature type="transmembrane region" description="Helical" evidence="1">
    <location>
        <begin position="70"/>
        <end position="90"/>
    </location>
</feature>
<feature type="transmembrane region" description="Helical" evidence="1">
    <location>
        <begin position="92"/>
        <end position="112"/>
    </location>
</feature>
<evidence type="ECO:0000255" key="1"/>
<evidence type="ECO:0000305" key="2"/>
<proteinExistence type="inferred from homology"/>
<protein>
    <recommendedName>
        <fullName>UPF0132 membrane protein MJ1527</fullName>
    </recommendedName>
</protein>
<keyword id="KW-1003">Cell membrane</keyword>
<keyword id="KW-0472">Membrane</keyword>
<keyword id="KW-1185">Reference proteome</keyword>
<keyword id="KW-0812">Transmembrane</keyword>
<keyword id="KW-1133">Transmembrane helix</keyword>
<gene>
    <name type="ordered locus">MJ1527</name>
</gene>
<accession>Q58922</accession>
<dbReference type="EMBL" id="L77117">
    <property type="protein sequence ID" value="AAB99545.1"/>
    <property type="molecule type" value="Genomic_DNA"/>
</dbReference>
<dbReference type="PIR" id="F64490">
    <property type="entry name" value="F64490"/>
</dbReference>
<dbReference type="SMR" id="Q58922"/>
<dbReference type="STRING" id="243232.MJ_1527"/>
<dbReference type="PaxDb" id="243232-MJ_1527"/>
<dbReference type="EnsemblBacteria" id="AAB99545">
    <property type="protein sequence ID" value="AAB99545"/>
    <property type="gene ID" value="MJ_1527"/>
</dbReference>
<dbReference type="KEGG" id="mja:MJ_1527"/>
<dbReference type="eggNOG" id="arCOG04344">
    <property type="taxonomic scope" value="Archaea"/>
</dbReference>
<dbReference type="HOGENOM" id="CLU_095018_3_0_2"/>
<dbReference type="InParanoid" id="Q58922"/>
<dbReference type="PhylomeDB" id="Q58922"/>
<dbReference type="Proteomes" id="UP000000805">
    <property type="component" value="Chromosome"/>
</dbReference>
<dbReference type="GO" id="GO:0005886">
    <property type="term" value="C:plasma membrane"/>
    <property type="evidence" value="ECO:0007669"/>
    <property type="project" value="UniProtKB-SubCell"/>
</dbReference>
<dbReference type="InterPro" id="IPR019109">
    <property type="entry name" value="DUF4870"/>
</dbReference>
<dbReference type="PANTHER" id="PTHR36460">
    <property type="entry name" value="UPF0132 DOMAIN PROTEIN (AFU_ORTHOLOGUE AFUA_3G10255)"/>
    <property type="match status" value="1"/>
</dbReference>
<dbReference type="PANTHER" id="PTHR36460:SF1">
    <property type="entry name" value="UPF0132 DOMAIN PROTEIN (AFU_ORTHOLOGUE AFUA_3G10255)"/>
    <property type="match status" value="1"/>
</dbReference>
<dbReference type="Pfam" id="PF09685">
    <property type="entry name" value="DUF4870"/>
    <property type="match status" value="1"/>
</dbReference>
<organism>
    <name type="scientific">Methanocaldococcus jannaschii (strain ATCC 43067 / DSM 2661 / JAL-1 / JCM 10045 / NBRC 100440)</name>
    <name type="common">Methanococcus jannaschii</name>
    <dbReference type="NCBI Taxonomy" id="243232"/>
    <lineage>
        <taxon>Archaea</taxon>
        <taxon>Methanobacteriati</taxon>
        <taxon>Methanobacteriota</taxon>
        <taxon>Methanomada group</taxon>
        <taxon>Methanococci</taxon>
        <taxon>Methanococcales</taxon>
        <taxon>Methanocaldococcaceae</taxon>
        <taxon>Methanocaldococcus</taxon>
    </lineage>
</organism>
<name>Y1527_METJA</name>
<comment type="subcellular location">
    <subcellularLocation>
        <location evidence="2">Cell membrane</location>
        <topology evidence="2">Multi-pass membrane protein</topology>
    </subcellularLocation>
</comment>
<comment type="similarity">
    <text evidence="2">Belongs to the UPF0132 family.</text>
</comment>
<reference key="1">
    <citation type="journal article" date="1996" name="Science">
        <title>Complete genome sequence of the methanogenic archaeon, Methanococcus jannaschii.</title>
        <authorList>
            <person name="Bult C.J."/>
            <person name="White O."/>
            <person name="Olsen G.J."/>
            <person name="Zhou L."/>
            <person name="Fleischmann R.D."/>
            <person name="Sutton G.G."/>
            <person name="Blake J.A."/>
            <person name="FitzGerald L.M."/>
            <person name="Clayton R.A."/>
            <person name="Gocayne J.D."/>
            <person name="Kerlavage A.R."/>
            <person name="Dougherty B.A."/>
            <person name="Tomb J.-F."/>
            <person name="Adams M.D."/>
            <person name="Reich C.I."/>
            <person name="Overbeek R."/>
            <person name="Kirkness E.F."/>
            <person name="Weinstock K.G."/>
            <person name="Merrick J.M."/>
            <person name="Glodek A."/>
            <person name="Scott J.L."/>
            <person name="Geoghagen N.S.M."/>
            <person name="Weidman J.F."/>
            <person name="Fuhrmann J.L."/>
            <person name="Nguyen D."/>
            <person name="Utterback T.R."/>
            <person name="Kelley J.M."/>
            <person name="Peterson J.D."/>
            <person name="Sadow P.W."/>
            <person name="Hanna M.C."/>
            <person name="Cotton M.D."/>
            <person name="Roberts K.M."/>
            <person name="Hurst M.A."/>
            <person name="Kaine B.P."/>
            <person name="Borodovsky M."/>
            <person name="Klenk H.-P."/>
            <person name="Fraser C.M."/>
            <person name="Smith H.O."/>
            <person name="Woese C.R."/>
            <person name="Venter J.C."/>
        </authorList>
    </citation>
    <scope>NUCLEOTIDE SEQUENCE [LARGE SCALE GENOMIC DNA]</scope>
    <source>
        <strain>ATCC 43067 / DSM 2661 / JAL-1 / JCM 10045 / NBRC 100440</strain>
    </source>
</reference>